<sequence length="347" mass="39101">MKPPIFFLIMSTVISGTLIVMTSSHWMLTWIGFEMNMLAIIPILMKKFNPRSMEASTKYFLTQATASMLLMMGIIINLLYSGQWTVPNNPNPMASILMTTALAMKLGLAPFHFWVPEVTQGIPLSSGMILLTWQKIAPLSVLYQISPTINPNLLLPMATLSVLIGGWGGLNQTQLRKILAYSSIAHMGWMTAILLYNPTMMILNLTIYIIMTLTTFMLFMLNSTTTTLSLSQTWNKMPLITSLITMLMLSLGGLPPLSGFMPKWMIIQELTKNEMIIMPTFLAITALLNLYFYMRLTYATALTMFPSTNNMKMKWQFESTKKMTFLPPLIITSTMLLPLTPMISILD</sequence>
<name>NU2M_GENSE</name>
<comment type="function">
    <text evidence="1">Core subunit of the mitochondrial membrane respiratory chain NADH dehydrogenase (Complex I) which catalyzes electron transfer from NADH through the respiratory chain, using ubiquinone as an electron acceptor. Essential for the catalytic activity and assembly of complex I.</text>
</comment>
<comment type="catalytic activity">
    <reaction evidence="1">
        <text>a ubiquinone + NADH + 5 H(+)(in) = a ubiquinol + NAD(+) + 4 H(+)(out)</text>
        <dbReference type="Rhea" id="RHEA:29091"/>
        <dbReference type="Rhea" id="RHEA-COMP:9565"/>
        <dbReference type="Rhea" id="RHEA-COMP:9566"/>
        <dbReference type="ChEBI" id="CHEBI:15378"/>
        <dbReference type="ChEBI" id="CHEBI:16389"/>
        <dbReference type="ChEBI" id="CHEBI:17976"/>
        <dbReference type="ChEBI" id="CHEBI:57540"/>
        <dbReference type="ChEBI" id="CHEBI:57945"/>
        <dbReference type="EC" id="7.1.1.2"/>
    </reaction>
</comment>
<comment type="subunit">
    <text evidence="1 2">Core subunit of respiratory chain NADH dehydrogenase (Complex I) which is composed of 45 different subunits. Interacts with TMEM242 (By similarity).</text>
</comment>
<comment type="subcellular location">
    <subcellularLocation>
        <location evidence="2">Mitochondrion inner membrane</location>
        <topology evidence="3">Multi-pass membrane protein</topology>
    </subcellularLocation>
</comment>
<comment type="similarity">
    <text evidence="4">Belongs to the complex I subunit 2 family.</text>
</comment>
<accession>Q85PP8</accession>
<keyword id="KW-0249">Electron transport</keyword>
<keyword id="KW-0472">Membrane</keyword>
<keyword id="KW-0496">Mitochondrion</keyword>
<keyword id="KW-0999">Mitochondrion inner membrane</keyword>
<keyword id="KW-0520">NAD</keyword>
<keyword id="KW-0679">Respiratory chain</keyword>
<keyword id="KW-1278">Translocase</keyword>
<keyword id="KW-0812">Transmembrane</keyword>
<keyword id="KW-1133">Transmembrane helix</keyword>
<keyword id="KW-0813">Transport</keyword>
<keyword id="KW-0830">Ubiquinone</keyword>
<dbReference type="EC" id="7.1.1.2" evidence="1"/>
<dbReference type="EMBL" id="AY170058">
    <property type="protein sequence ID" value="AAN84592.1"/>
    <property type="molecule type" value="Genomic_DNA"/>
</dbReference>
<dbReference type="SMR" id="Q85PP8"/>
<dbReference type="GO" id="GO:0005743">
    <property type="term" value="C:mitochondrial inner membrane"/>
    <property type="evidence" value="ECO:0000250"/>
    <property type="project" value="UniProtKB"/>
</dbReference>
<dbReference type="GO" id="GO:0008137">
    <property type="term" value="F:NADH dehydrogenase (ubiquinone) activity"/>
    <property type="evidence" value="ECO:0000250"/>
    <property type="project" value="UniProtKB"/>
</dbReference>
<dbReference type="GO" id="GO:0006120">
    <property type="term" value="P:mitochondrial electron transport, NADH to ubiquinone"/>
    <property type="evidence" value="ECO:0000250"/>
    <property type="project" value="UniProtKB"/>
</dbReference>
<dbReference type="GO" id="GO:0032981">
    <property type="term" value="P:mitochondrial respiratory chain complex I assembly"/>
    <property type="evidence" value="ECO:0000250"/>
    <property type="project" value="UniProtKB"/>
</dbReference>
<dbReference type="InterPro" id="IPR050175">
    <property type="entry name" value="Complex_I_Subunit_2"/>
</dbReference>
<dbReference type="InterPro" id="IPR010933">
    <property type="entry name" value="NADH_DH_su2_C"/>
</dbReference>
<dbReference type="InterPro" id="IPR003917">
    <property type="entry name" value="NADH_UbQ_OxRdtase_chain2"/>
</dbReference>
<dbReference type="InterPro" id="IPR001750">
    <property type="entry name" value="ND/Mrp_TM"/>
</dbReference>
<dbReference type="PANTHER" id="PTHR46552">
    <property type="entry name" value="NADH-UBIQUINONE OXIDOREDUCTASE CHAIN 2"/>
    <property type="match status" value="1"/>
</dbReference>
<dbReference type="PANTHER" id="PTHR46552:SF1">
    <property type="entry name" value="NADH-UBIQUINONE OXIDOREDUCTASE CHAIN 2"/>
    <property type="match status" value="1"/>
</dbReference>
<dbReference type="Pfam" id="PF06444">
    <property type="entry name" value="NADH_dehy_S2_C"/>
    <property type="match status" value="1"/>
</dbReference>
<dbReference type="Pfam" id="PF00361">
    <property type="entry name" value="Proton_antipo_M"/>
    <property type="match status" value="1"/>
</dbReference>
<dbReference type="PRINTS" id="PR01436">
    <property type="entry name" value="NADHDHGNASE2"/>
</dbReference>
<reference key="1">
    <citation type="journal article" date="2003" name="Nature">
        <title>Single origin of Malagasy Carnivora from an African ancestor.</title>
        <authorList>
            <person name="Yoder A.D."/>
            <person name="Burns M.M."/>
            <person name="Zehr S."/>
            <person name="Delefosse T."/>
            <person name="Veron G."/>
            <person name="Goodman S.M."/>
            <person name="Flynn J.J."/>
        </authorList>
    </citation>
    <scope>NUCLEOTIDE SEQUENCE [GENOMIC DNA]</scope>
</reference>
<proteinExistence type="inferred from homology"/>
<geneLocation type="mitochondrion"/>
<organism>
    <name type="scientific">Genetta servalina</name>
    <name type="common">Servaline genet</name>
    <dbReference type="NCBI Taxonomy" id="205596"/>
    <lineage>
        <taxon>Eukaryota</taxon>
        <taxon>Metazoa</taxon>
        <taxon>Chordata</taxon>
        <taxon>Craniata</taxon>
        <taxon>Vertebrata</taxon>
        <taxon>Euteleostomi</taxon>
        <taxon>Mammalia</taxon>
        <taxon>Eutheria</taxon>
        <taxon>Laurasiatheria</taxon>
        <taxon>Carnivora</taxon>
        <taxon>Feliformia</taxon>
        <taxon>Viverridae</taxon>
        <taxon>Viverrinae</taxon>
        <taxon>Genetta</taxon>
    </lineage>
</organism>
<evidence type="ECO:0000250" key="1">
    <source>
        <dbReference type="UniProtKB" id="P03891"/>
    </source>
</evidence>
<evidence type="ECO:0000250" key="2">
    <source>
        <dbReference type="UniProtKB" id="P03892"/>
    </source>
</evidence>
<evidence type="ECO:0000255" key="3"/>
<evidence type="ECO:0000305" key="4"/>
<protein>
    <recommendedName>
        <fullName evidence="1">NADH-ubiquinone oxidoreductase chain 2</fullName>
        <ecNumber evidence="1">7.1.1.2</ecNumber>
    </recommendedName>
    <alternativeName>
        <fullName>NADH dehydrogenase subunit 2</fullName>
    </alternativeName>
</protein>
<feature type="chain" id="PRO_0000117589" description="NADH-ubiquinone oxidoreductase chain 2">
    <location>
        <begin position="1"/>
        <end position="347"/>
    </location>
</feature>
<feature type="transmembrane region" description="Helical" evidence="3">
    <location>
        <begin position="3"/>
        <end position="23"/>
    </location>
</feature>
<feature type="transmembrane region" description="Helical" evidence="3">
    <location>
        <begin position="25"/>
        <end position="45"/>
    </location>
</feature>
<feature type="transmembrane region" description="Helical" evidence="3">
    <location>
        <begin position="59"/>
        <end position="79"/>
    </location>
</feature>
<feature type="transmembrane region" description="Helical" evidence="3">
    <location>
        <begin position="96"/>
        <end position="116"/>
    </location>
</feature>
<feature type="transmembrane region" description="Helical" evidence="3">
    <location>
        <begin position="122"/>
        <end position="142"/>
    </location>
</feature>
<feature type="transmembrane region" description="Helical" evidence="3">
    <location>
        <begin position="149"/>
        <end position="169"/>
    </location>
</feature>
<feature type="transmembrane region" description="Helical" evidence="3">
    <location>
        <begin position="178"/>
        <end position="198"/>
    </location>
</feature>
<feature type="transmembrane region" description="Helical" evidence="3">
    <location>
        <begin position="201"/>
        <end position="221"/>
    </location>
</feature>
<feature type="transmembrane region" description="Helical" evidence="3">
    <location>
        <begin position="237"/>
        <end position="257"/>
    </location>
</feature>
<feature type="transmembrane region" description="Helical" evidence="3">
    <location>
        <begin position="274"/>
        <end position="294"/>
    </location>
</feature>
<feature type="transmembrane region" description="Helical" evidence="3">
    <location>
        <begin position="325"/>
        <end position="345"/>
    </location>
</feature>
<gene>
    <name evidence="1" type="primary">MT-ND2</name>
    <name type="synonym">MTND2</name>
    <name type="synonym">NADH2</name>
    <name type="synonym">ND2</name>
</gene>